<accession>A8GLH9</accession>
<keyword id="KW-0963">Cytoplasm</keyword>
<keyword id="KW-0378">Hydrolase</keyword>
<keyword id="KW-0694">RNA-binding</keyword>
<keyword id="KW-0820">tRNA-binding</keyword>
<gene>
    <name evidence="1" type="primary">dtd</name>
    <name type="ordered locus">Spro_4877</name>
</gene>
<feature type="chain" id="PRO_1000060910" description="D-aminoacyl-tRNA deacylase">
    <location>
        <begin position="1"/>
        <end position="145"/>
    </location>
</feature>
<feature type="short sequence motif" description="Gly-cisPro motif, important for rejection of L-amino acids" evidence="1">
    <location>
        <begin position="137"/>
        <end position="138"/>
    </location>
</feature>
<comment type="function">
    <text evidence="1">An aminoacyl-tRNA editing enzyme that deacylates mischarged D-aminoacyl-tRNAs. Also deacylates mischarged glycyl-tRNA(Ala), protecting cells against glycine mischarging by AlaRS. Acts via tRNA-based rather than protein-based catalysis; rejects L-amino acids rather than detecting D-amino acids in the active site. By recycling D-aminoacyl-tRNA to D-amino acids and free tRNA molecules, this enzyme counteracts the toxicity associated with the formation of D-aminoacyl-tRNA entities in vivo and helps enforce protein L-homochirality.</text>
</comment>
<comment type="catalytic activity">
    <reaction evidence="1">
        <text>glycyl-tRNA(Ala) + H2O = tRNA(Ala) + glycine + H(+)</text>
        <dbReference type="Rhea" id="RHEA:53744"/>
        <dbReference type="Rhea" id="RHEA-COMP:9657"/>
        <dbReference type="Rhea" id="RHEA-COMP:13640"/>
        <dbReference type="ChEBI" id="CHEBI:15377"/>
        <dbReference type="ChEBI" id="CHEBI:15378"/>
        <dbReference type="ChEBI" id="CHEBI:57305"/>
        <dbReference type="ChEBI" id="CHEBI:78442"/>
        <dbReference type="ChEBI" id="CHEBI:78522"/>
        <dbReference type="EC" id="3.1.1.96"/>
    </reaction>
</comment>
<comment type="catalytic activity">
    <reaction evidence="1">
        <text>a D-aminoacyl-tRNA + H2O = a tRNA + a D-alpha-amino acid + H(+)</text>
        <dbReference type="Rhea" id="RHEA:13953"/>
        <dbReference type="Rhea" id="RHEA-COMP:10123"/>
        <dbReference type="Rhea" id="RHEA-COMP:10124"/>
        <dbReference type="ChEBI" id="CHEBI:15377"/>
        <dbReference type="ChEBI" id="CHEBI:15378"/>
        <dbReference type="ChEBI" id="CHEBI:59871"/>
        <dbReference type="ChEBI" id="CHEBI:78442"/>
        <dbReference type="ChEBI" id="CHEBI:79333"/>
        <dbReference type="EC" id="3.1.1.96"/>
    </reaction>
</comment>
<comment type="subunit">
    <text evidence="1">Homodimer.</text>
</comment>
<comment type="subcellular location">
    <subcellularLocation>
        <location evidence="1">Cytoplasm</location>
    </subcellularLocation>
</comment>
<comment type="domain">
    <text evidence="1">A Gly-cisPro motif from one monomer fits into the active site of the other monomer to allow specific chiral rejection of L-amino acids.</text>
</comment>
<comment type="similarity">
    <text evidence="1">Belongs to the DTD family.</text>
</comment>
<proteinExistence type="inferred from homology"/>
<reference key="1">
    <citation type="submission" date="2007-09" db="EMBL/GenBank/DDBJ databases">
        <title>Complete sequence of chromosome of Serratia proteamaculans 568.</title>
        <authorList>
            <consortium name="US DOE Joint Genome Institute"/>
            <person name="Copeland A."/>
            <person name="Lucas S."/>
            <person name="Lapidus A."/>
            <person name="Barry K."/>
            <person name="Glavina del Rio T."/>
            <person name="Dalin E."/>
            <person name="Tice H."/>
            <person name="Pitluck S."/>
            <person name="Chain P."/>
            <person name="Malfatti S."/>
            <person name="Shin M."/>
            <person name="Vergez L."/>
            <person name="Schmutz J."/>
            <person name="Larimer F."/>
            <person name="Land M."/>
            <person name="Hauser L."/>
            <person name="Kyrpides N."/>
            <person name="Kim E."/>
            <person name="Taghavi S."/>
            <person name="Newman L."/>
            <person name="Vangronsveld J."/>
            <person name="van der Lelie D."/>
            <person name="Richardson P."/>
        </authorList>
    </citation>
    <scope>NUCLEOTIDE SEQUENCE [LARGE SCALE GENOMIC DNA]</scope>
    <source>
        <strain>568</strain>
    </source>
</reference>
<name>DTD_SERP5</name>
<sequence length="145" mass="15919">MIALIQRVLNASVTVEGQTVGNIGPGLLVLLGVEQDDNEQKAVRLCERVLGYRIFGDENDKMNLNVQQAGGSLLVVSQFTLVADTQKGMRPSFSRGAVPQEADRLYQYFVGQCRERGIETQTGEFAADMKVALVNDGPVTFWLQV</sequence>
<dbReference type="EC" id="3.1.1.96" evidence="1"/>
<dbReference type="EMBL" id="CP000826">
    <property type="protein sequence ID" value="ABV43969.1"/>
    <property type="molecule type" value="Genomic_DNA"/>
</dbReference>
<dbReference type="SMR" id="A8GLH9"/>
<dbReference type="STRING" id="399741.Spro_4877"/>
<dbReference type="KEGG" id="spe:Spro_4877"/>
<dbReference type="eggNOG" id="COG1490">
    <property type="taxonomic scope" value="Bacteria"/>
</dbReference>
<dbReference type="HOGENOM" id="CLU_076901_1_1_6"/>
<dbReference type="OrthoDB" id="9801395at2"/>
<dbReference type="GO" id="GO:0005737">
    <property type="term" value="C:cytoplasm"/>
    <property type="evidence" value="ECO:0007669"/>
    <property type="project" value="UniProtKB-SubCell"/>
</dbReference>
<dbReference type="GO" id="GO:0051500">
    <property type="term" value="F:D-tyrosyl-tRNA(Tyr) deacylase activity"/>
    <property type="evidence" value="ECO:0007669"/>
    <property type="project" value="TreeGrafter"/>
</dbReference>
<dbReference type="GO" id="GO:0106026">
    <property type="term" value="F:Gly-tRNA(Ala) deacylase activity"/>
    <property type="evidence" value="ECO:0007669"/>
    <property type="project" value="UniProtKB-UniRule"/>
</dbReference>
<dbReference type="GO" id="GO:0043908">
    <property type="term" value="F:Ser(Gly)-tRNA(Ala) hydrolase activity"/>
    <property type="evidence" value="ECO:0007669"/>
    <property type="project" value="UniProtKB-UniRule"/>
</dbReference>
<dbReference type="GO" id="GO:0000049">
    <property type="term" value="F:tRNA binding"/>
    <property type="evidence" value="ECO:0007669"/>
    <property type="project" value="UniProtKB-UniRule"/>
</dbReference>
<dbReference type="GO" id="GO:0019478">
    <property type="term" value="P:D-amino acid catabolic process"/>
    <property type="evidence" value="ECO:0007669"/>
    <property type="project" value="UniProtKB-UniRule"/>
</dbReference>
<dbReference type="CDD" id="cd00563">
    <property type="entry name" value="Dtyr_deacylase"/>
    <property type="match status" value="1"/>
</dbReference>
<dbReference type="FunFam" id="3.50.80.10:FF:000001">
    <property type="entry name" value="D-aminoacyl-tRNA deacylase"/>
    <property type="match status" value="1"/>
</dbReference>
<dbReference type="Gene3D" id="3.50.80.10">
    <property type="entry name" value="D-tyrosyl-tRNA(Tyr) deacylase"/>
    <property type="match status" value="1"/>
</dbReference>
<dbReference type="HAMAP" id="MF_00518">
    <property type="entry name" value="Deacylase_Dtd"/>
    <property type="match status" value="1"/>
</dbReference>
<dbReference type="InterPro" id="IPR003732">
    <property type="entry name" value="Daa-tRNA_deacyls_DTD"/>
</dbReference>
<dbReference type="InterPro" id="IPR023509">
    <property type="entry name" value="DTD-like_sf"/>
</dbReference>
<dbReference type="NCBIfam" id="TIGR00256">
    <property type="entry name" value="D-aminoacyl-tRNA deacylase"/>
    <property type="match status" value="1"/>
</dbReference>
<dbReference type="PANTHER" id="PTHR10472:SF5">
    <property type="entry name" value="D-AMINOACYL-TRNA DEACYLASE 1"/>
    <property type="match status" value="1"/>
</dbReference>
<dbReference type="PANTHER" id="PTHR10472">
    <property type="entry name" value="D-TYROSYL-TRNA TYR DEACYLASE"/>
    <property type="match status" value="1"/>
</dbReference>
<dbReference type="Pfam" id="PF02580">
    <property type="entry name" value="Tyr_Deacylase"/>
    <property type="match status" value="1"/>
</dbReference>
<dbReference type="SUPFAM" id="SSF69500">
    <property type="entry name" value="DTD-like"/>
    <property type="match status" value="1"/>
</dbReference>
<evidence type="ECO:0000255" key="1">
    <source>
        <dbReference type="HAMAP-Rule" id="MF_00518"/>
    </source>
</evidence>
<protein>
    <recommendedName>
        <fullName evidence="1">D-aminoacyl-tRNA deacylase</fullName>
        <shortName evidence="1">DTD</shortName>
        <ecNumber evidence="1">3.1.1.96</ecNumber>
    </recommendedName>
    <alternativeName>
        <fullName evidence="1">Gly-tRNA(Ala) deacylase</fullName>
    </alternativeName>
</protein>
<organism>
    <name type="scientific">Serratia proteamaculans (strain 568)</name>
    <dbReference type="NCBI Taxonomy" id="399741"/>
    <lineage>
        <taxon>Bacteria</taxon>
        <taxon>Pseudomonadati</taxon>
        <taxon>Pseudomonadota</taxon>
        <taxon>Gammaproteobacteria</taxon>
        <taxon>Enterobacterales</taxon>
        <taxon>Yersiniaceae</taxon>
        <taxon>Serratia</taxon>
    </lineage>
</organism>